<organism>
    <name type="scientific">Encephalitozoon cuniculi (strain GB-M1)</name>
    <name type="common">Microsporidian parasite</name>
    <dbReference type="NCBI Taxonomy" id="284813"/>
    <lineage>
        <taxon>Eukaryota</taxon>
        <taxon>Fungi</taxon>
        <taxon>Fungi incertae sedis</taxon>
        <taxon>Microsporidia</taxon>
        <taxon>Unikaryonidae</taxon>
        <taxon>Encephalitozoon</taxon>
    </lineage>
</organism>
<sequence>MRSISVGLDREESGSDGLCLGLVVLATLAAGFVAGSDVLRCRGFGPATGDVCLWVGAGFWRCPLPGGGADGQGPGFWDAALREARMFCRSCVGLRMIGWRR</sequence>
<feature type="chain" id="PRO_0000223090" description="Uncharacterized protein ECU07_0020">
    <location>
        <begin position="1"/>
        <end position="101"/>
    </location>
</feature>
<gene>
    <name type="ordered locus">ECU07_0020</name>
</gene>
<protein>
    <recommendedName>
        <fullName>Uncharacterized protein ECU07_0020</fullName>
    </recommendedName>
</protein>
<accession>Q8SV56</accession>
<keyword id="KW-1185">Reference proteome</keyword>
<dbReference type="EMBL" id="AL590447">
    <property type="protein sequence ID" value="CAD25534.1"/>
    <property type="molecule type" value="Genomic_DNA"/>
</dbReference>
<dbReference type="RefSeq" id="NP_585930.1">
    <property type="nucleotide sequence ID" value="NM_001041552.1"/>
</dbReference>
<dbReference type="GeneID" id="859358"/>
<dbReference type="KEGG" id="ecu:ECU07_0020"/>
<dbReference type="VEuPathDB" id="MicrosporidiaDB:ECU07_0020"/>
<dbReference type="HOGENOM" id="CLU_2291681_0_0_1"/>
<dbReference type="InParanoid" id="Q8SV56"/>
<dbReference type="Proteomes" id="UP000000819">
    <property type="component" value="Chromosome VII"/>
</dbReference>
<name>Y702_ENCCU</name>
<proteinExistence type="predicted"/>
<reference key="1">
    <citation type="journal article" date="2001" name="Nature">
        <title>Genome sequence and gene compaction of the eukaryote parasite Encephalitozoon cuniculi.</title>
        <authorList>
            <person name="Katinka M.D."/>
            <person name="Duprat S."/>
            <person name="Cornillot E."/>
            <person name="Metenier G."/>
            <person name="Thomarat F."/>
            <person name="Prensier G."/>
            <person name="Barbe V."/>
            <person name="Peyretaillade E."/>
            <person name="Brottier P."/>
            <person name="Wincker P."/>
            <person name="Delbac F."/>
            <person name="El Alaoui H."/>
            <person name="Peyret P."/>
            <person name="Saurin W."/>
            <person name="Gouy M."/>
            <person name="Weissenbach J."/>
            <person name="Vivares C.P."/>
        </authorList>
    </citation>
    <scope>NUCLEOTIDE SEQUENCE [LARGE SCALE GENOMIC DNA]</scope>
    <source>
        <strain>GB-M1</strain>
    </source>
</reference>